<proteinExistence type="inferred from homology"/>
<accession>Q28UX0</accession>
<reference key="1">
    <citation type="submission" date="2006-02" db="EMBL/GenBank/DDBJ databases">
        <title>Complete sequence of chromosome of Jannaschia sp. CCS1.</title>
        <authorList>
            <consortium name="US DOE Joint Genome Institute"/>
            <person name="Copeland A."/>
            <person name="Lucas S."/>
            <person name="Lapidus A."/>
            <person name="Barry K."/>
            <person name="Detter J.C."/>
            <person name="Glavina del Rio T."/>
            <person name="Hammon N."/>
            <person name="Israni S."/>
            <person name="Pitluck S."/>
            <person name="Brettin T."/>
            <person name="Bruce D."/>
            <person name="Han C."/>
            <person name="Tapia R."/>
            <person name="Gilna P."/>
            <person name="Chertkov O."/>
            <person name="Saunders E."/>
            <person name="Schmutz J."/>
            <person name="Larimer F."/>
            <person name="Land M."/>
            <person name="Kyrpides N."/>
            <person name="Lykidis A."/>
            <person name="Moran M.A."/>
            <person name="Belas R."/>
            <person name="Ye W."/>
            <person name="Buchan A."/>
            <person name="Gonzalez J.M."/>
            <person name="Schell M.A."/>
            <person name="Richardson P."/>
        </authorList>
    </citation>
    <scope>NUCLEOTIDE SEQUENCE [LARGE SCALE GENOMIC DNA]</scope>
    <source>
        <strain>CCS1</strain>
    </source>
</reference>
<name>RS12_JANSC</name>
<dbReference type="EMBL" id="CP000264">
    <property type="protein sequence ID" value="ABD53492.1"/>
    <property type="molecule type" value="Genomic_DNA"/>
</dbReference>
<dbReference type="RefSeq" id="WP_011453701.1">
    <property type="nucleotide sequence ID" value="NC_007802.1"/>
</dbReference>
<dbReference type="SMR" id="Q28UX0"/>
<dbReference type="STRING" id="290400.Jann_0575"/>
<dbReference type="KEGG" id="jan:Jann_0575"/>
<dbReference type="eggNOG" id="COG0048">
    <property type="taxonomic scope" value="Bacteria"/>
</dbReference>
<dbReference type="HOGENOM" id="CLU_104295_1_2_5"/>
<dbReference type="OrthoDB" id="9802366at2"/>
<dbReference type="Proteomes" id="UP000008326">
    <property type="component" value="Chromosome"/>
</dbReference>
<dbReference type="GO" id="GO:0015935">
    <property type="term" value="C:small ribosomal subunit"/>
    <property type="evidence" value="ECO:0007669"/>
    <property type="project" value="InterPro"/>
</dbReference>
<dbReference type="GO" id="GO:0019843">
    <property type="term" value="F:rRNA binding"/>
    <property type="evidence" value="ECO:0007669"/>
    <property type="project" value="UniProtKB-UniRule"/>
</dbReference>
<dbReference type="GO" id="GO:0003735">
    <property type="term" value="F:structural constituent of ribosome"/>
    <property type="evidence" value="ECO:0007669"/>
    <property type="project" value="InterPro"/>
</dbReference>
<dbReference type="GO" id="GO:0000049">
    <property type="term" value="F:tRNA binding"/>
    <property type="evidence" value="ECO:0007669"/>
    <property type="project" value="UniProtKB-UniRule"/>
</dbReference>
<dbReference type="GO" id="GO:0006412">
    <property type="term" value="P:translation"/>
    <property type="evidence" value="ECO:0007669"/>
    <property type="project" value="UniProtKB-UniRule"/>
</dbReference>
<dbReference type="CDD" id="cd03368">
    <property type="entry name" value="Ribosomal_S12"/>
    <property type="match status" value="1"/>
</dbReference>
<dbReference type="FunFam" id="2.40.50.140:FF:000001">
    <property type="entry name" value="30S ribosomal protein S12"/>
    <property type="match status" value="1"/>
</dbReference>
<dbReference type="Gene3D" id="2.40.50.140">
    <property type="entry name" value="Nucleic acid-binding proteins"/>
    <property type="match status" value="1"/>
</dbReference>
<dbReference type="HAMAP" id="MF_00403_B">
    <property type="entry name" value="Ribosomal_uS12_B"/>
    <property type="match status" value="1"/>
</dbReference>
<dbReference type="InterPro" id="IPR012340">
    <property type="entry name" value="NA-bd_OB-fold"/>
</dbReference>
<dbReference type="InterPro" id="IPR006032">
    <property type="entry name" value="Ribosomal_uS12"/>
</dbReference>
<dbReference type="InterPro" id="IPR005679">
    <property type="entry name" value="Ribosomal_uS12_bac"/>
</dbReference>
<dbReference type="NCBIfam" id="TIGR00981">
    <property type="entry name" value="rpsL_bact"/>
    <property type="match status" value="1"/>
</dbReference>
<dbReference type="PANTHER" id="PTHR11652">
    <property type="entry name" value="30S RIBOSOMAL PROTEIN S12 FAMILY MEMBER"/>
    <property type="match status" value="1"/>
</dbReference>
<dbReference type="Pfam" id="PF00164">
    <property type="entry name" value="Ribosom_S12_S23"/>
    <property type="match status" value="1"/>
</dbReference>
<dbReference type="PIRSF" id="PIRSF002133">
    <property type="entry name" value="Ribosomal_S12/S23"/>
    <property type="match status" value="1"/>
</dbReference>
<dbReference type="PRINTS" id="PR01034">
    <property type="entry name" value="RIBOSOMALS12"/>
</dbReference>
<dbReference type="SUPFAM" id="SSF50249">
    <property type="entry name" value="Nucleic acid-binding proteins"/>
    <property type="match status" value="1"/>
</dbReference>
<dbReference type="PROSITE" id="PS00055">
    <property type="entry name" value="RIBOSOMAL_S12"/>
    <property type="match status" value="1"/>
</dbReference>
<sequence>MPTIQQLIRKPRQPKIKRSKSQHMEGCPQKRGVCTRVYTTTPKKPNSAMRKVAKVRLTNGYEVISYIPGESHNLQEHSVVLIRGGRVKDLPGVRYHILRGVLDTQGVKDRRQRRSKYGAKRPK</sequence>
<gene>
    <name evidence="2" type="primary">rpsL</name>
    <name type="ordered locus">Jann_0575</name>
</gene>
<keyword id="KW-0488">Methylation</keyword>
<keyword id="KW-1185">Reference proteome</keyword>
<keyword id="KW-0687">Ribonucleoprotein</keyword>
<keyword id="KW-0689">Ribosomal protein</keyword>
<keyword id="KW-0694">RNA-binding</keyword>
<keyword id="KW-0699">rRNA-binding</keyword>
<keyword id="KW-0820">tRNA-binding</keyword>
<protein>
    <recommendedName>
        <fullName evidence="2">Small ribosomal subunit protein uS12</fullName>
    </recommendedName>
    <alternativeName>
        <fullName evidence="4">30S ribosomal protein S12</fullName>
    </alternativeName>
</protein>
<evidence type="ECO:0000250" key="1"/>
<evidence type="ECO:0000255" key="2">
    <source>
        <dbReference type="HAMAP-Rule" id="MF_00403"/>
    </source>
</evidence>
<evidence type="ECO:0000256" key="3">
    <source>
        <dbReference type="SAM" id="MobiDB-lite"/>
    </source>
</evidence>
<evidence type="ECO:0000305" key="4"/>
<comment type="function">
    <text evidence="2">With S4 and S5 plays an important role in translational accuracy.</text>
</comment>
<comment type="function">
    <text evidence="2">Interacts with and stabilizes bases of the 16S rRNA that are involved in tRNA selection in the A site and with the mRNA backbone. Located at the interface of the 30S and 50S subunits, it traverses the body of the 30S subunit contacting proteins on the other side and probably holding the rRNA structure together. The combined cluster of proteins S8, S12 and S17 appears to hold together the shoulder and platform of the 30S subunit.</text>
</comment>
<comment type="subunit">
    <text evidence="2">Part of the 30S ribosomal subunit. Contacts proteins S8 and S17. May interact with IF1 in the 30S initiation complex.</text>
</comment>
<comment type="similarity">
    <text evidence="2">Belongs to the universal ribosomal protein uS12 family.</text>
</comment>
<organism>
    <name type="scientific">Jannaschia sp. (strain CCS1)</name>
    <dbReference type="NCBI Taxonomy" id="290400"/>
    <lineage>
        <taxon>Bacteria</taxon>
        <taxon>Pseudomonadati</taxon>
        <taxon>Pseudomonadota</taxon>
        <taxon>Alphaproteobacteria</taxon>
        <taxon>Rhodobacterales</taxon>
        <taxon>Roseobacteraceae</taxon>
        <taxon>Jannaschia</taxon>
    </lineage>
</organism>
<feature type="chain" id="PRO_0000263564" description="Small ribosomal subunit protein uS12">
    <location>
        <begin position="1"/>
        <end position="123"/>
    </location>
</feature>
<feature type="region of interest" description="Disordered" evidence="3">
    <location>
        <begin position="1"/>
        <end position="30"/>
    </location>
</feature>
<feature type="region of interest" description="Disordered" evidence="3">
    <location>
        <begin position="104"/>
        <end position="123"/>
    </location>
</feature>
<feature type="compositionally biased region" description="Basic residues" evidence="3">
    <location>
        <begin position="9"/>
        <end position="21"/>
    </location>
</feature>
<feature type="compositionally biased region" description="Basic residues" evidence="3">
    <location>
        <begin position="110"/>
        <end position="123"/>
    </location>
</feature>
<feature type="modified residue" description="3-methylthioaspartic acid" evidence="1">
    <location>
        <position position="89"/>
    </location>
</feature>